<sequence length="683" mass="76797">MAETKPTYYITTPIYYPSGKLHIGNSYTTIACDTLARYKRAMGYDVYFLTGTDEHGLKIEEKAEKLNTDPKSYVDGMAKQIKDLWQLLEISNDKFIRTTDDYHERAVQEIFDRLLKNGDIYLGEYEGWYSVDDEEYFTETQLAEVFRDDNGKVIGGKAPSGHEVELVKEQSYFFKMSKYADWLLDYYQSHPDFIEPANRMTEMINNFIKPGLEDLAVSRTSFTWGVPVKSDPKHVVYVWIDALTNYITALGYATGDSEDLFNKFWPADVQMVGKEIVRFHTIYWPIILHALGLPLPKKVFGHGWLLMKDGKMSKSKGNVIYPETLVERYGLDALRYYLVKAMPYGNDGLFTPEDFVARVNYDLANDLGNLLNRTIAMINKYEDGQLPAFKAGVTEFDADLEATAATTIKNFNACMDSLHLSDALAEVWKLVSRTNKYIDETAPWQLAKSDDANDADKLASVMAHLAASLRVIASLISPVMTHAPKEIFTQLGLDPATLAIADLQLADLPAGAQVVAKGTPIFPRVDMDAEVEFLKGKMTKSDKQKGRKAMENAKHEAEVEQGWNPAETNLNLTKPAITIDDFDKVELKVAEVITVQKLKGADKLLQFRLDAGDADHRQILSGIAKWYPEPEELIGKKVIIVGNLKPRKLRGEMSQGMLLSAEHDGQVQLITVPDNMVNGSLIS</sequence>
<keyword id="KW-0030">Aminoacyl-tRNA synthetase</keyword>
<keyword id="KW-0067">ATP-binding</keyword>
<keyword id="KW-0963">Cytoplasm</keyword>
<keyword id="KW-0436">Ligase</keyword>
<keyword id="KW-0547">Nucleotide-binding</keyword>
<keyword id="KW-0648">Protein biosynthesis</keyword>
<keyword id="KW-1185">Reference proteome</keyword>
<keyword id="KW-0694">RNA-binding</keyword>
<keyword id="KW-0820">tRNA-binding</keyword>
<reference key="1">
    <citation type="journal article" date="2003" name="Proc. Natl. Acad. Sci. U.S.A.">
        <title>Complete genome sequence of Lactobacillus plantarum WCFS1.</title>
        <authorList>
            <person name="Kleerebezem M."/>
            <person name="Boekhorst J."/>
            <person name="van Kranenburg R."/>
            <person name="Molenaar D."/>
            <person name="Kuipers O.P."/>
            <person name="Leer R."/>
            <person name="Tarchini R."/>
            <person name="Peters S.A."/>
            <person name="Sandbrink H.M."/>
            <person name="Fiers M.W.E.J."/>
            <person name="Stiekema W."/>
            <person name="Klein Lankhorst R.M."/>
            <person name="Bron P.A."/>
            <person name="Hoffer S.M."/>
            <person name="Nierop Groot M.N."/>
            <person name="Kerkhoven R."/>
            <person name="De Vries M."/>
            <person name="Ursing B."/>
            <person name="De Vos W.M."/>
            <person name="Siezen R.J."/>
        </authorList>
    </citation>
    <scope>NUCLEOTIDE SEQUENCE [LARGE SCALE GENOMIC DNA]</scope>
    <source>
        <strain>ATCC BAA-793 / NCIMB 8826 / WCFS1</strain>
    </source>
</reference>
<reference key="2">
    <citation type="journal article" date="2012" name="J. Bacteriol.">
        <title>Complete resequencing and reannotation of the Lactobacillus plantarum WCFS1 genome.</title>
        <authorList>
            <person name="Siezen R.J."/>
            <person name="Francke C."/>
            <person name="Renckens B."/>
            <person name="Boekhorst J."/>
            <person name="Wels M."/>
            <person name="Kleerebezem M."/>
            <person name="van Hijum S.A."/>
        </authorList>
    </citation>
    <scope>NUCLEOTIDE SEQUENCE [LARGE SCALE GENOMIC DNA]</scope>
    <scope>GENOME REANNOTATION</scope>
    <source>
        <strain>ATCC BAA-793 / NCIMB 8826 / WCFS1</strain>
    </source>
</reference>
<name>SYM_LACPL</name>
<feature type="chain" id="PRO_0000139224" description="Methionine--tRNA ligase">
    <location>
        <begin position="1"/>
        <end position="683"/>
    </location>
</feature>
<feature type="domain" description="tRNA-binding" evidence="1">
    <location>
        <begin position="581"/>
        <end position="683"/>
    </location>
</feature>
<feature type="short sequence motif" description="'HIGH' region">
    <location>
        <begin position="15"/>
        <end position="25"/>
    </location>
</feature>
<feature type="short sequence motif" description="'KMSKS' region">
    <location>
        <begin position="311"/>
        <end position="315"/>
    </location>
</feature>
<feature type="binding site" evidence="1">
    <location>
        <position position="314"/>
    </location>
    <ligand>
        <name>ATP</name>
        <dbReference type="ChEBI" id="CHEBI:30616"/>
    </ligand>
</feature>
<dbReference type="EC" id="6.1.1.10" evidence="1"/>
<dbReference type="EMBL" id="AL935263">
    <property type="protein sequence ID" value="CCC77957.1"/>
    <property type="molecule type" value="Genomic_DNA"/>
</dbReference>
<dbReference type="RefSeq" id="WP_003643823.1">
    <property type="nucleotide sequence ID" value="NC_004567.2"/>
</dbReference>
<dbReference type="RefSeq" id="YP_004888471.1">
    <property type="nucleotide sequence ID" value="NC_004567.2"/>
</dbReference>
<dbReference type="SMR" id="Q88Z97"/>
<dbReference type="STRING" id="220668.lp_0454"/>
<dbReference type="EnsemblBacteria" id="CCC77957">
    <property type="protein sequence ID" value="CCC77957"/>
    <property type="gene ID" value="lp_0454"/>
</dbReference>
<dbReference type="GeneID" id="89668113"/>
<dbReference type="KEGG" id="lpl:lp_0454"/>
<dbReference type="PATRIC" id="fig|220668.9.peg.374"/>
<dbReference type="eggNOG" id="COG0073">
    <property type="taxonomic scope" value="Bacteria"/>
</dbReference>
<dbReference type="eggNOG" id="COG0143">
    <property type="taxonomic scope" value="Bacteria"/>
</dbReference>
<dbReference type="HOGENOM" id="CLU_009710_9_4_9"/>
<dbReference type="OrthoDB" id="9810191at2"/>
<dbReference type="PhylomeDB" id="Q88Z97"/>
<dbReference type="Proteomes" id="UP000000432">
    <property type="component" value="Chromosome"/>
</dbReference>
<dbReference type="GO" id="GO:0005737">
    <property type="term" value="C:cytoplasm"/>
    <property type="evidence" value="ECO:0007669"/>
    <property type="project" value="UniProtKB-SubCell"/>
</dbReference>
<dbReference type="GO" id="GO:0005524">
    <property type="term" value="F:ATP binding"/>
    <property type="evidence" value="ECO:0007669"/>
    <property type="project" value="UniProtKB-UniRule"/>
</dbReference>
<dbReference type="GO" id="GO:0004825">
    <property type="term" value="F:methionine-tRNA ligase activity"/>
    <property type="evidence" value="ECO:0007669"/>
    <property type="project" value="UniProtKB-UniRule"/>
</dbReference>
<dbReference type="GO" id="GO:0000049">
    <property type="term" value="F:tRNA binding"/>
    <property type="evidence" value="ECO:0007669"/>
    <property type="project" value="UniProtKB-KW"/>
</dbReference>
<dbReference type="GO" id="GO:0006431">
    <property type="term" value="P:methionyl-tRNA aminoacylation"/>
    <property type="evidence" value="ECO:0007669"/>
    <property type="project" value="UniProtKB-UniRule"/>
</dbReference>
<dbReference type="CDD" id="cd07957">
    <property type="entry name" value="Anticodon_Ia_Met"/>
    <property type="match status" value="1"/>
</dbReference>
<dbReference type="CDD" id="cd00814">
    <property type="entry name" value="MetRS_core"/>
    <property type="match status" value="1"/>
</dbReference>
<dbReference type="CDD" id="cd02800">
    <property type="entry name" value="tRNA_bind_EcMetRS_like"/>
    <property type="match status" value="1"/>
</dbReference>
<dbReference type="FunFam" id="1.10.730.10:FF:000026">
    <property type="entry name" value="Methionine--tRNA ligase"/>
    <property type="match status" value="1"/>
</dbReference>
<dbReference type="FunFam" id="2.170.220.10:FF:000002">
    <property type="entry name" value="Methionine--tRNA ligase"/>
    <property type="match status" value="1"/>
</dbReference>
<dbReference type="FunFam" id="2.40.50.140:FF:000042">
    <property type="entry name" value="Methionine--tRNA ligase"/>
    <property type="match status" value="1"/>
</dbReference>
<dbReference type="Gene3D" id="2.170.220.10">
    <property type="match status" value="1"/>
</dbReference>
<dbReference type="Gene3D" id="3.40.50.620">
    <property type="entry name" value="HUPs"/>
    <property type="match status" value="1"/>
</dbReference>
<dbReference type="Gene3D" id="1.10.730.10">
    <property type="entry name" value="Isoleucyl-tRNA Synthetase, Domain 1"/>
    <property type="match status" value="1"/>
</dbReference>
<dbReference type="Gene3D" id="2.40.50.140">
    <property type="entry name" value="Nucleic acid-binding proteins"/>
    <property type="match status" value="1"/>
</dbReference>
<dbReference type="HAMAP" id="MF_01228">
    <property type="entry name" value="Met_tRNA_synth_type2"/>
    <property type="match status" value="1"/>
</dbReference>
<dbReference type="InterPro" id="IPR001412">
    <property type="entry name" value="aa-tRNA-synth_I_CS"/>
</dbReference>
<dbReference type="InterPro" id="IPR041872">
    <property type="entry name" value="Anticodon_Met"/>
</dbReference>
<dbReference type="InterPro" id="IPR004495">
    <property type="entry name" value="Met-tRNA-synth_bsu_C"/>
</dbReference>
<dbReference type="InterPro" id="IPR014758">
    <property type="entry name" value="Met-tRNA_synth"/>
</dbReference>
<dbReference type="InterPro" id="IPR023457">
    <property type="entry name" value="Met-tRNA_synth_2"/>
</dbReference>
<dbReference type="InterPro" id="IPR015413">
    <property type="entry name" value="Methionyl/Leucyl_tRNA_Synth"/>
</dbReference>
<dbReference type="InterPro" id="IPR033911">
    <property type="entry name" value="MetRS_core"/>
</dbReference>
<dbReference type="InterPro" id="IPR012340">
    <property type="entry name" value="NA-bd_OB-fold"/>
</dbReference>
<dbReference type="InterPro" id="IPR014729">
    <property type="entry name" value="Rossmann-like_a/b/a_fold"/>
</dbReference>
<dbReference type="InterPro" id="IPR002547">
    <property type="entry name" value="tRNA-bd_dom"/>
</dbReference>
<dbReference type="InterPro" id="IPR009080">
    <property type="entry name" value="tRNAsynth_Ia_anticodon-bd"/>
</dbReference>
<dbReference type="NCBIfam" id="TIGR00398">
    <property type="entry name" value="metG"/>
    <property type="match status" value="1"/>
</dbReference>
<dbReference type="NCBIfam" id="TIGR00399">
    <property type="entry name" value="metG_C_term"/>
    <property type="match status" value="1"/>
</dbReference>
<dbReference type="NCBIfam" id="NF008900">
    <property type="entry name" value="PRK12267.1"/>
    <property type="match status" value="1"/>
</dbReference>
<dbReference type="PANTHER" id="PTHR43326:SF1">
    <property type="entry name" value="METHIONINE--TRNA LIGASE, MITOCHONDRIAL"/>
    <property type="match status" value="1"/>
</dbReference>
<dbReference type="PANTHER" id="PTHR43326">
    <property type="entry name" value="METHIONYL-TRNA SYNTHETASE"/>
    <property type="match status" value="1"/>
</dbReference>
<dbReference type="Pfam" id="PF19303">
    <property type="entry name" value="Anticodon_3"/>
    <property type="match status" value="1"/>
</dbReference>
<dbReference type="Pfam" id="PF09334">
    <property type="entry name" value="tRNA-synt_1g"/>
    <property type="match status" value="1"/>
</dbReference>
<dbReference type="Pfam" id="PF01588">
    <property type="entry name" value="tRNA_bind"/>
    <property type="match status" value="1"/>
</dbReference>
<dbReference type="PRINTS" id="PR01041">
    <property type="entry name" value="TRNASYNTHMET"/>
</dbReference>
<dbReference type="SUPFAM" id="SSF47323">
    <property type="entry name" value="Anticodon-binding domain of a subclass of class I aminoacyl-tRNA synthetases"/>
    <property type="match status" value="1"/>
</dbReference>
<dbReference type="SUPFAM" id="SSF50249">
    <property type="entry name" value="Nucleic acid-binding proteins"/>
    <property type="match status" value="1"/>
</dbReference>
<dbReference type="SUPFAM" id="SSF52374">
    <property type="entry name" value="Nucleotidylyl transferase"/>
    <property type="match status" value="1"/>
</dbReference>
<dbReference type="PROSITE" id="PS00178">
    <property type="entry name" value="AA_TRNA_LIGASE_I"/>
    <property type="match status" value="1"/>
</dbReference>
<dbReference type="PROSITE" id="PS50886">
    <property type="entry name" value="TRBD"/>
    <property type="match status" value="1"/>
</dbReference>
<accession>Q88Z97</accession>
<accession>F9UU37</accession>
<protein>
    <recommendedName>
        <fullName evidence="1">Methionine--tRNA ligase</fullName>
        <ecNumber evidence="1">6.1.1.10</ecNumber>
    </recommendedName>
    <alternativeName>
        <fullName evidence="1">Methionyl-tRNA synthetase</fullName>
        <shortName evidence="1">MetRS</shortName>
    </alternativeName>
</protein>
<evidence type="ECO:0000255" key="1">
    <source>
        <dbReference type="HAMAP-Rule" id="MF_01228"/>
    </source>
</evidence>
<comment type="function">
    <text evidence="1">Is required not only for elongation of protein synthesis but also for the initiation of all mRNA translation through initiator tRNA(fMet) aminoacylation.</text>
</comment>
<comment type="catalytic activity">
    <reaction evidence="1">
        <text>tRNA(Met) + L-methionine + ATP = L-methionyl-tRNA(Met) + AMP + diphosphate</text>
        <dbReference type="Rhea" id="RHEA:13481"/>
        <dbReference type="Rhea" id="RHEA-COMP:9667"/>
        <dbReference type="Rhea" id="RHEA-COMP:9698"/>
        <dbReference type="ChEBI" id="CHEBI:30616"/>
        <dbReference type="ChEBI" id="CHEBI:33019"/>
        <dbReference type="ChEBI" id="CHEBI:57844"/>
        <dbReference type="ChEBI" id="CHEBI:78442"/>
        <dbReference type="ChEBI" id="CHEBI:78530"/>
        <dbReference type="ChEBI" id="CHEBI:456215"/>
        <dbReference type="EC" id="6.1.1.10"/>
    </reaction>
</comment>
<comment type="subunit">
    <text evidence="1">Homodimer.</text>
</comment>
<comment type="subcellular location">
    <subcellularLocation>
        <location evidence="1">Cytoplasm</location>
    </subcellularLocation>
</comment>
<comment type="similarity">
    <text evidence="1">Belongs to the class-I aminoacyl-tRNA synthetase family. MetG type 2B subfamily.</text>
</comment>
<proteinExistence type="inferred from homology"/>
<gene>
    <name evidence="1" type="primary">metG</name>
    <name type="synonym">metS</name>
    <name type="ordered locus">lp_0454</name>
</gene>
<organism>
    <name type="scientific">Lactiplantibacillus plantarum (strain ATCC BAA-793 / NCIMB 8826 / WCFS1)</name>
    <name type="common">Lactobacillus plantarum</name>
    <dbReference type="NCBI Taxonomy" id="220668"/>
    <lineage>
        <taxon>Bacteria</taxon>
        <taxon>Bacillati</taxon>
        <taxon>Bacillota</taxon>
        <taxon>Bacilli</taxon>
        <taxon>Lactobacillales</taxon>
        <taxon>Lactobacillaceae</taxon>
        <taxon>Lactiplantibacillus</taxon>
    </lineage>
</organism>